<gene>
    <name type="primary">PLA2G2A</name>
</gene>
<organism>
    <name type="scientific">Oryctolagus cuniculus</name>
    <name type="common">Rabbit</name>
    <dbReference type="NCBI Taxonomy" id="9986"/>
    <lineage>
        <taxon>Eukaryota</taxon>
        <taxon>Metazoa</taxon>
        <taxon>Chordata</taxon>
        <taxon>Craniata</taxon>
        <taxon>Vertebrata</taxon>
        <taxon>Euteleostomi</taxon>
        <taxon>Mammalia</taxon>
        <taxon>Eutheria</taxon>
        <taxon>Euarchontoglires</taxon>
        <taxon>Glires</taxon>
        <taxon>Lagomorpha</taxon>
        <taxon>Leporidae</taxon>
        <taxon>Oryctolagus</taxon>
    </lineage>
</organism>
<comment type="function">
    <text evidence="1 2 5">Secretory calcium-dependent phospholipase A2 that primarily targets extracellular phospholipids with implications in host antimicrobial defense, inflammatory response and tissue regeneration (By similarity). Hydrolyzes the ester bond of the fatty acyl group attached at sn-2 position of phospholipids (phospholipase A2 activity) with preference for phosphatidylethanolamines and phosphatidylglycerols over phosphatidylcholines (PubMed:2668261). Contributes to lipid remodeling of cellular membranes and generation of lipid mediators involved in pathogen clearance. Displays bactericidal activity against Gram-positive bacteria by directly hydrolyzing phospholipids of the bacterial membrane. Upon sterile inflammation, targets membrane phospholipids of extracellular mitochondria released from activated platelets, generating free unsaturated fatty acids such as arachidonate that is used by neighboring leukocytes to synthesize inflammatory eicosanoids such as leukotrienes. Simultaneously, by compromising mitochondrial membrane integrity, promotes the release in circulation of potent damage-associated molecular pattern molecules that activate the innate immune response (By similarity). Plays a stem cell regulator role in the intestinal crypt. Within intracellular compartment mediates Paneth cell differentiation and its stem cell supporting functions by inhibiting Wnt signaling pathway in intestinal stem cell (ICS). Secreted in the intestinal lumen upon inflammation, acts in an autocrine way and promotes prostaglandin E2 synthesis that stimulates Wnt signaling pathway in ICS cells and tissue regeneration (By similarity). May play a role in the biosynthesis of N-acyl ethanolamines that regulate energy metabolism and inflammation. Hydrolyzes N-acyl phosphatidylethanolamines to N-acyl lysophosphatidylethanolamines, which are further cleaved by a lysophospholipase D to release N-acyl ethanolamines. Independent of its catalytic activity, acts as a ligand for integrins. Binds to and activates integrins ITGAV:ITGB3, ITGA4:ITGB1 and ITGA5:ITGB1. Binds to a site (site 2) which is distinct from the classical ligand-binding site (site 1) and induces integrin conformational changes and enhanced ligand binding to site 1. Induces cell proliferation in an integrin-dependent manner (By similarity).</text>
</comment>
<comment type="catalytic activity">
    <reaction evidence="5">
        <text>a 1,2-diacyl-sn-glycero-3-phosphoethanolamine + H2O = a 1-acyl-sn-glycero-3-phosphoethanolamine + a fatty acid + H(+)</text>
        <dbReference type="Rhea" id="RHEA:44604"/>
        <dbReference type="ChEBI" id="CHEBI:15377"/>
        <dbReference type="ChEBI" id="CHEBI:15378"/>
        <dbReference type="ChEBI" id="CHEBI:28868"/>
        <dbReference type="ChEBI" id="CHEBI:64381"/>
        <dbReference type="ChEBI" id="CHEBI:64612"/>
    </reaction>
    <physiologicalReaction direction="left-to-right" evidence="7">
        <dbReference type="Rhea" id="RHEA:44605"/>
    </physiologicalReaction>
</comment>
<comment type="catalytic activity">
    <reaction evidence="1">
        <text>1-hexadecanoyl-2-(9Z-octadecenoyl)-sn-glycero-3-phosphoethanolamine + H2O = 1-hexadecanoyl-sn-glycero-3-phosphoethanolamine + (9Z)-octadecenoate + H(+)</text>
        <dbReference type="Rhea" id="RHEA:40911"/>
        <dbReference type="ChEBI" id="CHEBI:15377"/>
        <dbReference type="ChEBI" id="CHEBI:15378"/>
        <dbReference type="ChEBI" id="CHEBI:30823"/>
        <dbReference type="ChEBI" id="CHEBI:73004"/>
        <dbReference type="ChEBI" id="CHEBI:73007"/>
    </reaction>
    <physiologicalReaction direction="left-to-right" evidence="1">
        <dbReference type="Rhea" id="RHEA:40912"/>
    </physiologicalReaction>
</comment>
<comment type="catalytic activity">
    <reaction evidence="1">
        <text>1-hexadecanoyl-2-(9Z,12Z-octadecadienoyl)-sn-glycero-3-phosphoethanolamine + H2O = 1-hexadecanoyl-sn-glycero-3-phosphoethanolamine + (9Z,12Z)-octadecadienoate + H(+)</text>
        <dbReference type="Rhea" id="RHEA:40815"/>
        <dbReference type="ChEBI" id="CHEBI:15377"/>
        <dbReference type="ChEBI" id="CHEBI:15378"/>
        <dbReference type="ChEBI" id="CHEBI:30245"/>
        <dbReference type="ChEBI" id="CHEBI:73004"/>
        <dbReference type="ChEBI" id="CHEBI:73008"/>
    </reaction>
    <physiologicalReaction direction="left-to-right" evidence="1">
        <dbReference type="Rhea" id="RHEA:40816"/>
    </physiologicalReaction>
</comment>
<comment type="catalytic activity">
    <reaction evidence="5">
        <text>1-acyl-2-(5Z,8Z,11Z,14Z)-eicosatetraenoyl-sn-glycero-3-phosphoethanolamine + H2O = a 1-acyl-sn-glycero-3-phosphoethanolamine + (5Z,8Z,11Z,14Z)-eicosatetraenoate + H(+)</text>
        <dbReference type="Rhea" id="RHEA:40647"/>
        <dbReference type="ChEBI" id="CHEBI:15377"/>
        <dbReference type="ChEBI" id="CHEBI:15378"/>
        <dbReference type="ChEBI" id="CHEBI:32395"/>
        <dbReference type="ChEBI" id="CHEBI:64381"/>
        <dbReference type="ChEBI" id="CHEBI:75067"/>
    </reaction>
    <physiologicalReaction direction="left-to-right" evidence="7">
        <dbReference type="Rhea" id="RHEA:40648"/>
    </physiologicalReaction>
</comment>
<comment type="catalytic activity">
    <reaction evidence="1">
        <text>1-hexadecanoyl-2-(5Z,8Z,11Z,14Z-eicosatetraenoyl)-sn-glycero-3-phosphoethanolamine + H2O = 1-hexadecanoyl-sn-glycero-3-phosphoethanolamine + (5Z,8Z,11Z,14Z)-eicosatetraenoate + H(+)</text>
        <dbReference type="Rhea" id="RHEA:40431"/>
        <dbReference type="ChEBI" id="CHEBI:15377"/>
        <dbReference type="ChEBI" id="CHEBI:15378"/>
        <dbReference type="ChEBI" id="CHEBI:32395"/>
        <dbReference type="ChEBI" id="CHEBI:73004"/>
        <dbReference type="ChEBI" id="CHEBI:73009"/>
    </reaction>
    <physiologicalReaction direction="left-to-right" evidence="1">
        <dbReference type="Rhea" id="RHEA:40432"/>
    </physiologicalReaction>
</comment>
<comment type="catalytic activity">
    <reaction evidence="1">
        <text>N-hexadecanoyl-1,2-di-(9Z-octadecenoyl)-sn-glycero-3-phosphoethanolamine + H2O = N-hexadecanoyl-1-(9Z-octadecenoyl)-sn-glycero-3-phosphoethanolamine + (9Z)-octadecenoate + H(+)</text>
        <dbReference type="Rhea" id="RHEA:45424"/>
        <dbReference type="ChEBI" id="CHEBI:15377"/>
        <dbReference type="ChEBI" id="CHEBI:15378"/>
        <dbReference type="ChEBI" id="CHEBI:30823"/>
        <dbReference type="ChEBI" id="CHEBI:78097"/>
        <dbReference type="ChEBI" id="CHEBI:85217"/>
    </reaction>
    <physiologicalReaction direction="left-to-right" evidence="1">
        <dbReference type="Rhea" id="RHEA:45425"/>
    </physiologicalReaction>
</comment>
<comment type="catalytic activity">
    <reaction evidence="1">
        <text>1,2-dihexadecanoyl-sn-glycero-3-phospho-(1'-sn-glycerol) + H2O = 1-hexadecanoyl-sn-glycero-3-phospho-(1'-sn-glycerol) + hexadecanoate + H(+)</text>
        <dbReference type="Rhea" id="RHEA:45472"/>
        <dbReference type="ChEBI" id="CHEBI:7896"/>
        <dbReference type="ChEBI" id="CHEBI:15377"/>
        <dbReference type="ChEBI" id="CHEBI:15378"/>
        <dbReference type="ChEBI" id="CHEBI:72829"/>
        <dbReference type="ChEBI" id="CHEBI:75158"/>
    </reaction>
    <physiologicalReaction direction="left-to-right" evidence="1">
        <dbReference type="Rhea" id="RHEA:45473"/>
    </physiologicalReaction>
</comment>
<comment type="catalytic activity">
    <reaction evidence="1">
        <text>1-hexadecanoyl-2-(9Z-octadecenoyl)-sn-glycero-3-phosphoglycerol + H2O = 1-hexadecanoyl-sn-glycero-3-phosphoglycerol + (9Z)-octadecenoate + H(+)</text>
        <dbReference type="Rhea" id="RHEA:44524"/>
        <dbReference type="ChEBI" id="CHEBI:15377"/>
        <dbReference type="ChEBI" id="CHEBI:15378"/>
        <dbReference type="ChEBI" id="CHEBI:30823"/>
        <dbReference type="ChEBI" id="CHEBI:84472"/>
        <dbReference type="ChEBI" id="CHEBI:84475"/>
    </reaction>
    <physiologicalReaction direction="left-to-right" evidence="1">
        <dbReference type="Rhea" id="RHEA:44525"/>
    </physiologicalReaction>
</comment>
<comment type="catalytic activity">
    <reaction evidence="1">
        <text>1-hexadecanoyl-2-(9Z-octadecenoyl)-sn-glycero-3-phospho-(1'-sn-glycerol) + H2O = 1-hexadecanoyl-sn-glycero-3-phospho-(1'-sn-glycerol) + (9Z)-octadecenoate + H(+)</text>
        <dbReference type="Rhea" id="RHEA:40919"/>
        <dbReference type="ChEBI" id="CHEBI:15377"/>
        <dbReference type="ChEBI" id="CHEBI:15378"/>
        <dbReference type="ChEBI" id="CHEBI:30823"/>
        <dbReference type="ChEBI" id="CHEBI:72841"/>
        <dbReference type="ChEBI" id="CHEBI:75158"/>
    </reaction>
    <physiologicalReaction direction="left-to-right" evidence="1">
        <dbReference type="Rhea" id="RHEA:40920"/>
    </physiologicalReaction>
</comment>
<comment type="catalytic activity">
    <reaction evidence="3 4">
        <text>a 1,2-diacyl-sn-glycero-3-phosphocholine + H2O = a 1-acyl-sn-glycero-3-phosphocholine + a fatty acid + H(+)</text>
        <dbReference type="Rhea" id="RHEA:15801"/>
        <dbReference type="ChEBI" id="CHEBI:15377"/>
        <dbReference type="ChEBI" id="CHEBI:15378"/>
        <dbReference type="ChEBI" id="CHEBI:28868"/>
        <dbReference type="ChEBI" id="CHEBI:57643"/>
        <dbReference type="ChEBI" id="CHEBI:58168"/>
        <dbReference type="EC" id="3.1.1.4"/>
    </reaction>
    <physiologicalReaction direction="left-to-right" evidence="1">
        <dbReference type="Rhea" id="RHEA:15802"/>
    </physiologicalReaction>
</comment>
<comment type="catalytic activity">
    <reaction evidence="1">
        <text>1,2-dihexadecanoyl-sn-glycero-3-phosphocholine + H2O = 1-hexadecanoyl-sn-glycero-3-phosphocholine + hexadecanoate + H(+)</text>
        <dbReference type="Rhea" id="RHEA:41223"/>
        <dbReference type="ChEBI" id="CHEBI:7896"/>
        <dbReference type="ChEBI" id="CHEBI:15377"/>
        <dbReference type="ChEBI" id="CHEBI:15378"/>
        <dbReference type="ChEBI" id="CHEBI:72998"/>
        <dbReference type="ChEBI" id="CHEBI:72999"/>
    </reaction>
    <physiologicalReaction direction="left-to-right" evidence="1">
        <dbReference type="Rhea" id="RHEA:41224"/>
    </physiologicalReaction>
</comment>
<comment type="catalytic activity">
    <reaction evidence="1">
        <text>1-hexadecanoyl-2-(9Z-octadecenoyl)-sn-glycero-3-phosphocholine + H2O = 1-hexadecanoyl-sn-glycero-3-phosphocholine + (9Z)-octadecenoate + H(+)</text>
        <dbReference type="Rhea" id="RHEA:38779"/>
        <dbReference type="ChEBI" id="CHEBI:15377"/>
        <dbReference type="ChEBI" id="CHEBI:15378"/>
        <dbReference type="ChEBI" id="CHEBI:30823"/>
        <dbReference type="ChEBI" id="CHEBI:72998"/>
        <dbReference type="ChEBI" id="CHEBI:73001"/>
    </reaction>
    <physiologicalReaction direction="left-to-right" evidence="1">
        <dbReference type="Rhea" id="RHEA:38780"/>
    </physiologicalReaction>
</comment>
<comment type="catalytic activity">
    <reaction evidence="1">
        <text>1-hexadecanoyl-2-(9Z,12Z-octadecadienoyl)-sn-glycero-3-phosphocholine + H2O = (9Z,12Z)-octadecadienoate + 1-hexadecanoyl-sn-glycero-3-phosphocholine + H(+)</text>
        <dbReference type="Rhea" id="RHEA:40811"/>
        <dbReference type="ChEBI" id="CHEBI:15377"/>
        <dbReference type="ChEBI" id="CHEBI:15378"/>
        <dbReference type="ChEBI" id="CHEBI:30245"/>
        <dbReference type="ChEBI" id="CHEBI:72998"/>
        <dbReference type="ChEBI" id="CHEBI:73002"/>
    </reaction>
    <physiologicalReaction direction="left-to-right" evidence="1">
        <dbReference type="Rhea" id="RHEA:40812"/>
    </physiologicalReaction>
</comment>
<comment type="catalytic activity">
    <reaction evidence="1">
        <text>1-hexadecanoyl-2-(4Z,7Z,10Z,13Z,16Z,19Z-docosahexaenoyl)-sn-glycero-3-phosphocholine + H2O = (4Z,7Z,10Z,13Z,16Z,19Z)-docosahexaenoate + 1-hexadecanoyl-sn-glycero-3-phosphocholine + H(+)</text>
        <dbReference type="Rhea" id="RHEA:41231"/>
        <dbReference type="ChEBI" id="CHEBI:15377"/>
        <dbReference type="ChEBI" id="CHEBI:15378"/>
        <dbReference type="ChEBI" id="CHEBI:72998"/>
        <dbReference type="ChEBI" id="CHEBI:74963"/>
        <dbReference type="ChEBI" id="CHEBI:77016"/>
    </reaction>
    <physiologicalReaction direction="left-to-right" evidence="1">
        <dbReference type="Rhea" id="RHEA:41232"/>
    </physiologicalReaction>
</comment>
<comment type="cofactor">
    <cofactor evidence="5">
        <name>Ca(2+)</name>
        <dbReference type="ChEBI" id="CHEBI:29108"/>
    </cofactor>
    <text evidence="1">Binds 1 Ca(2+) ion per subunit.</text>
</comment>
<comment type="biophysicochemical properties">
    <phDependence>
        <text evidence="5">Optimum pH is 8.5.</text>
    </phDependence>
</comment>
<comment type="subcellular location">
    <subcellularLocation>
        <location evidence="5">Secreted</location>
    </subcellularLocation>
    <subcellularLocation>
        <location evidence="1">Cell membrane</location>
        <topology evidence="1">Peripheral membrane protein</topology>
    </subcellularLocation>
    <subcellularLocation>
        <location evidence="1">Mitochondrion outer membrane</location>
        <topology evidence="1">Peripheral membrane protein</topology>
    </subcellularLocation>
</comment>
<comment type="similarity">
    <text evidence="6">Belongs to the phospholipase A2 family.</text>
</comment>
<protein>
    <recommendedName>
        <fullName>Phospholipase A2, membrane associated</fullName>
        <ecNumber evidence="1">3.1.1.4</ecNumber>
    </recommendedName>
    <alternativeName>
        <fullName>GIIC sPLA2</fullName>
    </alternativeName>
    <alternativeName>
        <fullName>Group IIA phospholipase A2</fullName>
    </alternativeName>
    <alternativeName>
        <fullName>Phosphatidylcholine 2-acylhydrolase 2A</fullName>
    </alternativeName>
</protein>
<reference key="1">
    <citation type="journal article" date="1989" name="J. Biochem.">
        <title>Purification of rabbit platelet secretory phospholipase A2 and its characteristics.</title>
        <authorList>
            <person name="Mizushima H."/>
            <person name="Kudo I."/>
            <person name="Horigome K."/>
            <person name="Murakami M."/>
            <person name="Hayakawa M."/>
            <person name="Kim D.K."/>
            <person name="Kondo E."/>
            <person name="Tomita M."/>
            <person name="Inoue K."/>
        </authorList>
    </citation>
    <scope>PROTEIN SEQUENCE OF 1-34 AND 40-68</scope>
    <scope>FUNCTION</scope>
    <scope>CATALYTIC ACTIVITY</scope>
    <scope>BIOPHYSICOCHEMICAL PROPERTIES</scope>
    <scope>COFACTOR</scope>
    <scope>SUBCELLULAR LOCATION</scope>
    <source>
        <tissue>Platelet</tissue>
    </source>
</reference>
<reference key="2">
    <citation type="journal article" date="1986" name="Biochemistry">
        <title>Structural and functional properties of a phospholipase A2 purified from an inflammatory exudate.</title>
        <authorList>
            <person name="Forst S."/>
            <person name="Weiss J."/>
            <person name="Elsbach P."/>
            <person name="Maraganore J.M."/>
            <person name="Reardon I."/>
            <person name="Heinrikson R.L."/>
        </authorList>
    </citation>
    <scope>PROTEIN SEQUENCE OF 1-39</scope>
</reference>
<feature type="chain" id="PRO_0000161589" description="Phospholipase A2, membrane associated">
    <location>
        <begin position="1"/>
        <end position="68" status="greater than"/>
    </location>
</feature>
<feature type="binding site" evidence="1">
    <location>
        <position position="27"/>
    </location>
    <ligand>
        <name>Ca(2+)</name>
        <dbReference type="ChEBI" id="CHEBI:29108"/>
    </ligand>
</feature>
<feature type="binding site" evidence="1">
    <location>
        <position position="29"/>
    </location>
    <ligand>
        <name>Ca(2+)</name>
        <dbReference type="ChEBI" id="CHEBI:29108"/>
    </ligand>
</feature>
<feature type="binding site" evidence="1">
    <location>
        <position position="31"/>
    </location>
    <ligand>
        <name>Ca(2+)</name>
        <dbReference type="ChEBI" id="CHEBI:29108"/>
    </ligand>
</feature>
<feature type="disulfide bond" evidence="1">
    <location>
        <begin position="26"/>
        <end position="66"/>
    </location>
</feature>
<feature type="sequence conflict" description="In Ref. 2; AA sequence." evidence="6" ref="2">
    <original>H</original>
    <variation>S</variation>
    <location>
        <position position="27"/>
    </location>
</feature>
<feature type="non-consecutive residues" evidence="6">
    <location>
        <begin position="39"/>
        <end position="40"/>
    </location>
</feature>
<feature type="non-consecutive residues" evidence="6">
    <location>
        <begin position="49"/>
        <end position="50"/>
    </location>
</feature>
<feature type="non-consecutive residues" evidence="6">
    <location>
        <begin position="56"/>
        <end position="57"/>
    </location>
</feature>
<feature type="non-terminal residue">
    <location>
        <position position="68"/>
    </location>
</feature>
<name>PA2GA_RABIT</name>
<keyword id="KW-0929">Antimicrobial</keyword>
<keyword id="KW-0081">Bacteriolytic enzyme</keyword>
<keyword id="KW-0106">Calcium</keyword>
<keyword id="KW-1003">Cell membrane</keyword>
<keyword id="KW-0903">Direct protein sequencing</keyword>
<keyword id="KW-1015">Disulfide bond</keyword>
<keyword id="KW-0378">Hydrolase</keyword>
<keyword id="KW-0395">Inflammatory response</keyword>
<keyword id="KW-0442">Lipid degradation</keyword>
<keyword id="KW-0443">Lipid metabolism</keyword>
<keyword id="KW-0472">Membrane</keyword>
<keyword id="KW-0479">Metal-binding</keyword>
<keyword id="KW-0496">Mitochondrion</keyword>
<keyword id="KW-1000">Mitochondrion outer membrane</keyword>
<keyword id="KW-1208">Phospholipid metabolism</keyword>
<keyword id="KW-1185">Reference proteome</keyword>
<keyword id="KW-0964">Secreted</keyword>
<proteinExistence type="evidence at protein level"/>
<accession>P14422</accession>
<dbReference type="EC" id="3.1.1.4" evidence="1"/>
<dbReference type="PIR" id="PX0019">
    <property type="entry name" value="PX0019"/>
</dbReference>
<dbReference type="STRING" id="9986.ENSOCUP00000005688"/>
<dbReference type="BindingDB" id="P14422"/>
<dbReference type="ChEMBL" id="CHEMBL5481"/>
<dbReference type="PaxDb" id="9986-ENSOCUP00000026675"/>
<dbReference type="InParanoid" id="P14422"/>
<dbReference type="SABIO-RK" id="P14422"/>
<dbReference type="Proteomes" id="UP000001811">
    <property type="component" value="Unplaced"/>
</dbReference>
<dbReference type="GO" id="GO:0005576">
    <property type="term" value="C:extracellular region"/>
    <property type="evidence" value="ECO:0007669"/>
    <property type="project" value="UniProtKB-SubCell"/>
</dbReference>
<dbReference type="GO" id="GO:0005741">
    <property type="term" value="C:mitochondrial outer membrane"/>
    <property type="evidence" value="ECO:0007669"/>
    <property type="project" value="UniProtKB-SubCell"/>
</dbReference>
<dbReference type="GO" id="GO:0005886">
    <property type="term" value="C:plasma membrane"/>
    <property type="evidence" value="ECO:0007669"/>
    <property type="project" value="UniProtKB-SubCell"/>
</dbReference>
<dbReference type="GO" id="GO:0005509">
    <property type="term" value="F:calcium ion binding"/>
    <property type="evidence" value="ECO:0007669"/>
    <property type="project" value="InterPro"/>
</dbReference>
<dbReference type="GO" id="GO:0047498">
    <property type="term" value="F:calcium-dependent phospholipase A2 activity"/>
    <property type="evidence" value="ECO:0000250"/>
    <property type="project" value="UniProtKB"/>
</dbReference>
<dbReference type="GO" id="GO:0050482">
    <property type="term" value="P:arachidonate secretion"/>
    <property type="evidence" value="ECO:0007669"/>
    <property type="project" value="InterPro"/>
</dbReference>
<dbReference type="GO" id="GO:0050830">
    <property type="term" value="P:defense response to Gram-positive bacterium"/>
    <property type="evidence" value="ECO:0000250"/>
    <property type="project" value="UniProtKB"/>
</dbReference>
<dbReference type="GO" id="GO:0006954">
    <property type="term" value="P:inflammatory response"/>
    <property type="evidence" value="ECO:0007669"/>
    <property type="project" value="UniProtKB-KW"/>
</dbReference>
<dbReference type="GO" id="GO:0036335">
    <property type="term" value="P:intestinal stem cell homeostasis"/>
    <property type="evidence" value="ECO:0000250"/>
    <property type="project" value="UniProtKB"/>
</dbReference>
<dbReference type="GO" id="GO:0031640">
    <property type="term" value="P:killing of cells of another organism"/>
    <property type="evidence" value="ECO:0007669"/>
    <property type="project" value="UniProtKB-KW"/>
</dbReference>
<dbReference type="GO" id="GO:0016042">
    <property type="term" value="P:lipid catabolic process"/>
    <property type="evidence" value="ECO:0007669"/>
    <property type="project" value="UniProtKB-KW"/>
</dbReference>
<dbReference type="GO" id="GO:0046470">
    <property type="term" value="P:phosphatidylcholine metabolic process"/>
    <property type="evidence" value="ECO:0000250"/>
    <property type="project" value="UniProtKB"/>
</dbReference>
<dbReference type="GO" id="GO:0046337">
    <property type="term" value="P:phosphatidylethanolamine metabolic process"/>
    <property type="evidence" value="ECO:0000250"/>
    <property type="project" value="UniProtKB"/>
</dbReference>
<dbReference type="GO" id="GO:1902563">
    <property type="term" value="P:regulation of neutrophil activation"/>
    <property type="evidence" value="ECO:0000250"/>
    <property type="project" value="UniProtKB"/>
</dbReference>
<dbReference type="Gene3D" id="1.20.90.10">
    <property type="entry name" value="Phospholipase A2 domain"/>
    <property type="match status" value="1"/>
</dbReference>
<dbReference type="InterPro" id="IPR001211">
    <property type="entry name" value="PLipase_A2"/>
</dbReference>
<dbReference type="InterPro" id="IPR016090">
    <property type="entry name" value="PLipase_A2_dom"/>
</dbReference>
<dbReference type="InterPro" id="IPR036444">
    <property type="entry name" value="PLipase_A2_dom_sf"/>
</dbReference>
<dbReference type="Pfam" id="PF00068">
    <property type="entry name" value="Phospholip_A2_1"/>
    <property type="match status" value="1"/>
</dbReference>
<dbReference type="PRINTS" id="PR00389">
    <property type="entry name" value="PHPHLIPASEA2"/>
</dbReference>
<dbReference type="SMART" id="SM00085">
    <property type="entry name" value="PA2c"/>
    <property type="match status" value="1"/>
</dbReference>
<dbReference type="SUPFAM" id="SSF48619">
    <property type="entry name" value="Phospholipase A2, PLA2"/>
    <property type="match status" value="1"/>
</dbReference>
<sequence length="68" mass="7592">HLLDFRKMIRYTTGKEATTSYGAYGCHCGVGGRGAPKXAKFLSYKFSMKKAAAACFKYQFYPNNRCXG</sequence>
<evidence type="ECO:0000250" key="1">
    <source>
        <dbReference type="UniProtKB" id="P14555"/>
    </source>
</evidence>
<evidence type="ECO:0000250" key="2">
    <source>
        <dbReference type="UniProtKB" id="P31482"/>
    </source>
</evidence>
<evidence type="ECO:0000255" key="3">
    <source>
        <dbReference type="PROSITE-ProRule" id="PRU10035"/>
    </source>
</evidence>
<evidence type="ECO:0000255" key="4">
    <source>
        <dbReference type="PROSITE-ProRule" id="PRU10036"/>
    </source>
</evidence>
<evidence type="ECO:0000269" key="5">
    <source>
    </source>
</evidence>
<evidence type="ECO:0000305" key="6"/>
<evidence type="ECO:0000305" key="7">
    <source>
    </source>
</evidence>